<comment type="function">
    <text evidence="1">Plays a role in nuclear translocation of the viral pre-integration complex (PIC), thus is required for the virus to infect non-dividing cells. Targets specific host proteins for degradation by the 26S proteasome. Acts by associating with the cellular CUL4A-DDB1 E3 ligase complex through direct interaction with host VPRPB/DCAF-1. This change in the E3 ligase substrate specificity results in the degradation of host SAMHD1. In turn, SAMHD1 depletion allows viral replication in host myeloid cells by preventing SAMHD1-mediated hydrolysis of intracellular dNTPs necessary for reverse transcription (By similarity).</text>
</comment>
<comment type="subunit">
    <text evidence="1 2 3">Interacts with the P6 region of unprocessed GAG (By similarity). Interacts with host VPRBP/DCAF1, leading to change substrate specificity of the CUL4A-DDB1 E3 ligase complex (By similarity). Interacts with host NUP153 (By similarity).</text>
</comment>
<comment type="subcellular location">
    <subcellularLocation>
        <location>Virion</location>
    </subcellularLocation>
    <subcellularLocation>
        <location>Host nucleus</location>
    </subcellularLocation>
    <text evidence="1">Nuclear just after virion uncoating, or if expressed in the absence of unprocessed GAG.</text>
</comment>
<comment type="similarity">
    <text evidence="6">Belongs to the lentivirus VPX protein family.</text>
</comment>
<gene>
    <name type="primary">vpx</name>
</gene>
<name>VPX_HV2ST</name>
<sequence>MAGPRETIPPGNSGEETIGEAFEWLDRTVEAINREAVNHLPRELIFQVWQRSWRYWHDEQGMSISYTKYRYLCLMQKAMFIHSKRGCTCLGGGHGPGGWRSGPPPPPPPGLV</sequence>
<evidence type="ECO:0000250" key="1"/>
<evidence type="ECO:0000250" key="2">
    <source>
        <dbReference type="UniProtKB" id="P12454"/>
    </source>
</evidence>
<evidence type="ECO:0000250" key="3">
    <source>
        <dbReference type="UniProtKB" id="P18099"/>
    </source>
</evidence>
<evidence type="ECO:0000250" key="4">
    <source>
        <dbReference type="UniProtKB" id="P19508"/>
    </source>
</evidence>
<evidence type="ECO:0000256" key="5">
    <source>
        <dbReference type="SAM" id="MobiDB-lite"/>
    </source>
</evidence>
<evidence type="ECO:0000305" key="6"/>
<proteinExistence type="inferred from homology"/>
<organismHost>
    <name type="scientific">Homo sapiens</name>
    <name type="common">Human</name>
    <dbReference type="NCBI Taxonomy" id="9606"/>
</organismHost>
<dbReference type="EMBL" id="M31113">
    <property type="protein sequence ID" value="AAB01354.1"/>
    <property type="molecule type" value="Genomic_DNA"/>
</dbReference>
<dbReference type="PIR" id="D33943">
    <property type="entry name" value="ASLJSX"/>
</dbReference>
<dbReference type="SMR" id="P20881"/>
<dbReference type="Proteomes" id="UP000007713">
    <property type="component" value="Segment"/>
</dbReference>
<dbReference type="GO" id="GO:0042025">
    <property type="term" value="C:host cell nucleus"/>
    <property type="evidence" value="ECO:0007669"/>
    <property type="project" value="UniProtKB-SubCell"/>
</dbReference>
<dbReference type="GO" id="GO:0044423">
    <property type="term" value="C:virion component"/>
    <property type="evidence" value="ECO:0007669"/>
    <property type="project" value="UniProtKB-KW"/>
</dbReference>
<dbReference type="GO" id="GO:0052170">
    <property type="term" value="P:symbiont-mediated suppression of host innate immune response"/>
    <property type="evidence" value="ECO:0007669"/>
    <property type="project" value="UniProtKB-KW"/>
</dbReference>
<dbReference type="GO" id="GO:0019058">
    <property type="term" value="P:viral life cycle"/>
    <property type="evidence" value="ECO:0007669"/>
    <property type="project" value="InterPro"/>
</dbReference>
<dbReference type="Gene3D" id="1.20.5.4730">
    <property type="match status" value="1"/>
</dbReference>
<dbReference type="InterPro" id="IPR053711">
    <property type="entry name" value="Lentiviral_Vpx_assoc_factor"/>
</dbReference>
<dbReference type="InterPro" id="IPR000012">
    <property type="entry name" value="RetroV_VpR/X"/>
</dbReference>
<dbReference type="Pfam" id="PF00522">
    <property type="entry name" value="VPR"/>
    <property type="match status" value="1"/>
</dbReference>
<accession>P20881</accession>
<keyword id="KW-0014">AIDS</keyword>
<keyword id="KW-1048">Host nucleus</keyword>
<keyword id="KW-0945">Host-virus interaction</keyword>
<keyword id="KW-1090">Inhibition of host innate immune response by virus</keyword>
<keyword id="KW-0899">Viral immunoevasion</keyword>
<keyword id="KW-0946">Virion</keyword>
<protein>
    <recommendedName>
        <fullName>Protein Vpx</fullName>
    </recommendedName>
    <alternativeName>
        <fullName>Viral protein X</fullName>
    </alternativeName>
    <alternativeName>
        <fullName>X ORF protein</fullName>
    </alternativeName>
</protein>
<feature type="chain" id="PRO_0000085398" description="Protein Vpx">
    <location>
        <begin position="1"/>
        <end position="112"/>
    </location>
</feature>
<feature type="region of interest" description="Binds to human NUP153" evidence="4">
    <location>
        <begin position="61"/>
        <end position="80"/>
    </location>
</feature>
<feature type="region of interest" description="Disordered" evidence="5">
    <location>
        <begin position="92"/>
        <end position="112"/>
    </location>
</feature>
<feature type="short sequence motif" description="Nuclear localization signal" evidence="1">
    <location>
        <begin position="65"/>
        <end position="72"/>
    </location>
</feature>
<feature type="compositionally biased region" description="Pro residues" evidence="5">
    <location>
        <begin position="102"/>
        <end position="112"/>
    </location>
</feature>
<reference key="1">
    <citation type="journal article" date="1990" name="J. Virol.">
        <title>Molecular characterization of an attenuated human immunodeficiency virus type 2 isolate.</title>
        <authorList>
            <person name="Kumar P."/>
            <person name="Hui H."/>
            <person name="Kappes J.C."/>
            <person name="Haggarty B.S."/>
            <person name="Hoxie J.A."/>
            <person name="Arya S.K."/>
            <person name="Shaw G.M."/>
            <person name="Hahn B.H."/>
        </authorList>
    </citation>
    <scope>NUCLEOTIDE SEQUENCE [GENOMIC DNA]</scope>
</reference>
<organism>
    <name type="scientific">Human immunodeficiency virus type 2 subtype A (isolate ST)</name>
    <name type="common">HIV-2</name>
    <dbReference type="NCBI Taxonomy" id="11721"/>
    <lineage>
        <taxon>Viruses</taxon>
        <taxon>Riboviria</taxon>
        <taxon>Pararnavirae</taxon>
        <taxon>Artverviricota</taxon>
        <taxon>Revtraviricetes</taxon>
        <taxon>Ortervirales</taxon>
        <taxon>Retroviridae</taxon>
        <taxon>Orthoretrovirinae</taxon>
        <taxon>Lentivirus</taxon>
        <taxon>Human immunodeficiency virus 2</taxon>
    </lineage>
</organism>